<sequence length="198" mass="22008">MQYPEPISKLIDSFMKLPGIGPKTAVRLAFFVLSMKEDVVLDFAKALVNAKRNLTYCSVCGHITDQDPCYICEDTRRDKSVICVVQDPKDVIAMEKMKEYNGLYHVLHGAISPMDGIGPEDIKIPELLKRLQDDQVTEVILATNPNIEGEATAMYISRLLKPSGIKLSRIAHGLPVGGDLEYADEVTLSKALEGRREM</sequence>
<keyword id="KW-0227">DNA damage</keyword>
<keyword id="KW-0233">DNA recombination</keyword>
<keyword id="KW-0234">DNA repair</keyword>
<keyword id="KW-0479">Metal-binding</keyword>
<keyword id="KW-1185">Reference proteome</keyword>
<keyword id="KW-0862">Zinc</keyword>
<keyword id="KW-0863">Zinc-finger</keyword>
<name>RECR_BACLD</name>
<gene>
    <name evidence="1" type="primary">recR</name>
    <name type="ordered locus">BLi00030</name>
    <name type="ordered locus">BL02359</name>
</gene>
<proteinExistence type="inferred from homology"/>
<feature type="chain" id="PRO_0000190281" description="Recombination protein RecR">
    <location>
        <begin position="1"/>
        <end position="198"/>
    </location>
</feature>
<feature type="domain" description="Toprim" evidence="1">
    <location>
        <begin position="80"/>
        <end position="175"/>
    </location>
</feature>
<feature type="zinc finger region" description="C4-type" evidence="1">
    <location>
        <begin position="57"/>
        <end position="72"/>
    </location>
</feature>
<reference key="1">
    <citation type="journal article" date="2004" name="J. Mol. Microbiol. Biotechnol.">
        <title>The complete genome sequence of Bacillus licheniformis DSM13, an organism with great industrial potential.</title>
        <authorList>
            <person name="Veith B."/>
            <person name="Herzberg C."/>
            <person name="Steckel S."/>
            <person name="Feesche J."/>
            <person name="Maurer K.H."/>
            <person name="Ehrenreich P."/>
            <person name="Baeumer S."/>
            <person name="Henne A."/>
            <person name="Liesegang H."/>
            <person name="Merkl R."/>
            <person name="Ehrenreich A."/>
            <person name="Gottschalk G."/>
        </authorList>
    </citation>
    <scope>NUCLEOTIDE SEQUENCE [LARGE SCALE GENOMIC DNA]</scope>
    <source>
        <strain>ATCC 14580 / DSM 13 / JCM 2505 / CCUG 7422 / NBRC 12200 / NCIMB 9375 / NCTC 10341 / NRRL NRS-1264 / Gibson 46</strain>
    </source>
</reference>
<reference key="2">
    <citation type="journal article" date="2004" name="Genome Biol.">
        <title>Complete genome sequence of the industrial bacterium Bacillus licheniformis and comparisons with closely related Bacillus species.</title>
        <authorList>
            <person name="Rey M.W."/>
            <person name="Ramaiya P."/>
            <person name="Nelson B.A."/>
            <person name="Brody-Karpin S.D."/>
            <person name="Zaretsky E.J."/>
            <person name="Tang M."/>
            <person name="Lopez de Leon A."/>
            <person name="Xiang H."/>
            <person name="Gusti V."/>
            <person name="Clausen I.G."/>
            <person name="Olsen P.B."/>
            <person name="Rasmussen M.D."/>
            <person name="Andersen J.T."/>
            <person name="Joergensen P.L."/>
            <person name="Larsen T.S."/>
            <person name="Sorokin A."/>
            <person name="Bolotin A."/>
            <person name="Lapidus A."/>
            <person name="Galleron N."/>
            <person name="Ehrlich S.D."/>
            <person name="Berka R.M."/>
        </authorList>
    </citation>
    <scope>NUCLEOTIDE SEQUENCE [LARGE SCALE GENOMIC DNA]</scope>
    <source>
        <strain>ATCC 14580 / DSM 13 / JCM 2505 / CCUG 7422 / NBRC 12200 / NCIMB 9375 / NCTC 10341 / NRRL NRS-1264 / Gibson 46</strain>
    </source>
</reference>
<accession>Q65PJ9</accession>
<accession>Q62ZY9</accession>
<dbReference type="EMBL" id="AE017333">
    <property type="protein sequence ID" value="AAU39015.1"/>
    <property type="molecule type" value="Genomic_DNA"/>
</dbReference>
<dbReference type="EMBL" id="CP000002">
    <property type="protein sequence ID" value="AAU21669.1"/>
    <property type="molecule type" value="Genomic_DNA"/>
</dbReference>
<dbReference type="RefSeq" id="WP_003178140.1">
    <property type="nucleotide sequence ID" value="NC_006322.1"/>
</dbReference>
<dbReference type="SMR" id="Q65PJ9"/>
<dbReference type="STRING" id="279010.BL02359"/>
<dbReference type="GeneID" id="92859019"/>
<dbReference type="KEGG" id="bld:BLi00030"/>
<dbReference type="KEGG" id="bli:BL02359"/>
<dbReference type="eggNOG" id="COG0353">
    <property type="taxonomic scope" value="Bacteria"/>
</dbReference>
<dbReference type="HOGENOM" id="CLU_060739_1_0_9"/>
<dbReference type="Proteomes" id="UP000000606">
    <property type="component" value="Chromosome"/>
</dbReference>
<dbReference type="GO" id="GO:0003677">
    <property type="term" value="F:DNA binding"/>
    <property type="evidence" value="ECO:0007669"/>
    <property type="project" value="UniProtKB-UniRule"/>
</dbReference>
<dbReference type="GO" id="GO:0008270">
    <property type="term" value="F:zinc ion binding"/>
    <property type="evidence" value="ECO:0007669"/>
    <property type="project" value="UniProtKB-KW"/>
</dbReference>
<dbReference type="GO" id="GO:0006310">
    <property type="term" value="P:DNA recombination"/>
    <property type="evidence" value="ECO:0007669"/>
    <property type="project" value="UniProtKB-UniRule"/>
</dbReference>
<dbReference type="GO" id="GO:0006281">
    <property type="term" value="P:DNA repair"/>
    <property type="evidence" value="ECO:0007669"/>
    <property type="project" value="UniProtKB-UniRule"/>
</dbReference>
<dbReference type="CDD" id="cd01025">
    <property type="entry name" value="TOPRIM_recR"/>
    <property type="match status" value="1"/>
</dbReference>
<dbReference type="Gene3D" id="3.30.60.80">
    <property type="match status" value="1"/>
</dbReference>
<dbReference type="Gene3D" id="3.40.1360.10">
    <property type="match status" value="1"/>
</dbReference>
<dbReference type="Gene3D" id="6.10.250.240">
    <property type="match status" value="1"/>
</dbReference>
<dbReference type="Gene3D" id="1.10.8.420">
    <property type="entry name" value="RecR Domain 1"/>
    <property type="match status" value="1"/>
</dbReference>
<dbReference type="HAMAP" id="MF_00017">
    <property type="entry name" value="RecR"/>
    <property type="match status" value="1"/>
</dbReference>
<dbReference type="InterPro" id="IPR000093">
    <property type="entry name" value="DNA_Rcmb_RecR"/>
</dbReference>
<dbReference type="InterPro" id="IPR023627">
    <property type="entry name" value="Rcmb_RecR"/>
</dbReference>
<dbReference type="InterPro" id="IPR015967">
    <property type="entry name" value="Rcmb_RecR_Znf"/>
</dbReference>
<dbReference type="InterPro" id="IPR006171">
    <property type="entry name" value="TOPRIM_dom"/>
</dbReference>
<dbReference type="InterPro" id="IPR034137">
    <property type="entry name" value="TOPRIM_RecR"/>
</dbReference>
<dbReference type="NCBIfam" id="TIGR00615">
    <property type="entry name" value="recR"/>
    <property type="match status" value="1"/>
</dbReference>
<dbReference type="PANTHER" id="PTHR30446">
    <property type="entry name" value="RECOMBINATION PROTEIN RECR"/>
    <property type="match status" value="1"/>
</dbReference>
<dbReference type="PANTHER" id="PTHR30446:SF0">
    <property type="entry name" value="RECOMBINATION PROTEIN RECR"/>
    <property type="match status" value="1"/>
</dbReference>
<dbReference type="Pfam" id="PF21175">
    <property type="entry name" value="RecR_C"/>
    <property type="match status" value="1"/>
</dbReference>
<dbReference type="Pfam" id="PF21176">
    <property type="entry name" value="RecR_HhH"/>
    <property type="match status" value="1"/>
</dbReference>
<dbReference type="Pfam" id="PF02132">
    <property type="entry name" value="RecR_ZnF"/>
    <property type="match status" value="1"/>
</dbReference>
<dbReference type="Pfam" id="PF13662">
    <property type="entry name" value="Toprim_4"/>
    <property type="match status" value="1"/>
</dbReference>
<dbReference type="SMART" id="SM00493">
    <property type="entry name" value="TOPRIM"/>
    <property type="match status" value="1"/>
</dbReference>
<dbReference type="SUPFAM" id="SSF111304">
    <property type="entry name" value="Recombination protein RecR"/>
    <property type="match status" value="1"/>
</dbReference>
<dbReference type="PROSITE" id="PS01300">
    <property type="entry name" value="RECR"/>
    <property type="match status" value="1"/>
</dbReference>
<dbReference type="PROSITE" id="PS50880">
    <property type="entry name" value="TOPRIM"/>
    <property type="match status" value="1"/>
</dbReference>
<protein>
    <recommendedName>
        <fullName evidence="1">Recombination protein RecR</fullName>
    </recommendedName>
</protein>
<comment type="function">
    <text evidence="1">May play a role in DNA repair. It seems to be involved in an RecBC-independent recombinational process of DNA repair. It may act with RecF and RecO.</text>
</comment>
<comment type="similarity">
    <text evidence="1">Belongs to the RecR family.</text>
</comment>
<evidence type="ECO:0000255" key="1">
    <source>
        <dbReference type="HAMAP-Rule" id="MF_00017"/>
    </source>
</evidence>
<organism>
    <name type="scientific">Bacillus licheniformis (strain ATCC 14580 / DSM 13 / JCM 2505 / CCUG 7422 / NBRC 12200 / NCIMB 9375 / NCTC 10341 / NRRL NRS-1264 / Gibson 46)</name>
    <dbReference type="NCBI Taxonomy" id="279010"/>
    <lineage>
        <taxon>Bacteria</taxon>
        <taxon>Bacillati</taxon>
        <taxon>Bacillota</taxon>
        <taxon>Bacilli</taxon>
        <taxon>Bacillales</taxon>
        <taxon>Bacillaceae</taxon>
        <taxon>Bacillus</taxon>
    </lineage>
</organism>